<protein>
    <recommendedName>
        <fullName evidence="1">Urocanate hydratase</fullName>
        <shortName evidence="1">Urocanase</shortName>
        <ecNumber evidence="1">4.2.1.49</ecNumber>
    </recommendedName>
    <alternativeName>
        <fullName evidence="1">Imidazolonepropionate hydrolase</fullName>
    </alternativeName>
</protein>
<gene>
    <name evidence="1" type="primary">hutU</name>
    <name type="ordered locus">RB0829</name>
    <name type="ORF">SMb21163</name>
</gene>
<organism>
    <name type="scientific">Rhizobium meliloti (strain 1021)</name>
    <name type="common">Ensifer meliloti</name>
    <name type="synonym">Sinorhizobium meliloti</name>
    <dbReference type="NCBI Taxonomy" id="266834"/>
    <lineage>
        <taxon>Bacteria</taxon>
        <taxon>Pseudomonadati</taxon>
        <taxon>Pseudomonadota</taxon>
        <taxon>Alphaproteobacteria</taxon>
        <taxon>Hyphomicrobiales</taxon>
        <taxon>Rhizobiaceae</taxon>
        <taxon>Sinorhizobium/Ensifer group</taxon>
        <taxon>Sinorhizobium</taxon>
    </lineage>
</organism>
<name>HUTU_RHIME</name>
<feature type="chain" id="PRO_0000207350" description="Urocanate hydratase">
    <location>
        <begin position="1"/>
        <end position="557"/>
    </location>
</feature>
<feature type="active site" evidence="1">
    <location>
        <position position="410"/>
    </location>
</feature>
<feature type="binding site" evidence="1">
    <location>
        <begin position="52"/>
        <end position="53"/>
    </location>
    <ligand>
        <name>NAD(+)</name>
        <dbReference type="ChEBI" id="CHEBI:57540"/>
    </ligand>
</feature>
<feature type="binding site" evidence="1">
    <location>
        <position position="130"/>
    </location>
    <ligand>
        <name>NAD(+)</name>
        <dbReference type="ChEBI" id="CHEBI:57540"/>
    </ligand>
</feature>
<feature type="binding site" evidence="1">
    <location>
        <begin position="176"/>
        <end position="178"/>
    </location>
    <ligand>
        <name>NAD(+)</name>
        <dbReference type="ChEBI" id="CHEBI:57540"/>
    </ligand>
</feature>
<feature type="binding site" evidence="1">
    <location>
        <position position="196"/>
    </location>
    <ligand>
        <name>NAD(+)</name>
        <dbReference type="ChEBI" id="CHEBI:57540"/>
    </ligand>
</feature>
<feature type="binding site" evidence="1">
    <location>
        <begin position="242"/>
        <end position="243"/>
    </location>
    <ligand>
        <name>NAD(+)</name>
        <dbReference type="ChEBI" id="CHEBI:57540"/>
    </ligand>
</feature>
<feature type="binding site" evidence="1">
    <location>
        <begin position="263"/>
        <end position="267"/>
    </location>
    <ligand>
        <name>NAD(+)</name>
        <dbReference type="ChEBI" id="CHEBI:57540"/>
    </ligand>
</feature>
<feature type="binding site" evidence="1">
    <location>
        <begin position="273"/>
        <end position="274"/>
    </location>
    <ligand>
        <name>NAD(+)</name>
        <dbReference type="ChEBI" id="CHEBI:57540"/>
    </ligand>
</feature>
<feature type="binding site" evidence="1">
    <location>
        <position position="322"/>
    </location>
    <ligand>
        <name>NAD(+)</name>
        <dbReference type="ChEBI" id="CHEBI:57540"/>
    </ligand>
</feature>
<feature type="binding site" evidence="1">
    <location>
        <position position="492"/>
    </location>
    <ligand>
        <name>NAD(+)</name>
        <dbReference type="ChEBI" id="CHEBI:57540"/>
    </ligand>
</feature>
<comment type="function">
    <text evidence="1">Catalyzes the conversion of urocanate to 4-imidazolone-5-propionate.</text>
</comment>
<comment type="catalytic activity">
    <reaction evidence="1">
        <text>4-imidazolone-5-propanoate = trans-urocanate + H2O</text>
        <dbReference type="Rhea" id="RHEA:13101"/>
        <dbReference type="ChEBI" id="CHEBI:15377"/>
        <dbReference type="ChEBI" id="CHEBI:17771"/>
        <dbReference type="ChEBI" id="CHEBI:77893"/>
        <dbReference type="EC" id="4.2.1.49"/>
    </reaction>
</comment>
<comment type="cofactor">
    <cofactor evidence="1">
        <name>NAD(+)</name>
        <dbReference type="ChEBI" id="CHEBI:57540"/>
    </cofactor>
    <text evidence="1">Binds 1 NAD(+) per subunit.</text>
</comment>
<comment type="pathway">
    <text evidence="1">Amino-acid degradation; L-histidine degradation into L-glutamate; N-formimidoyl-L-glutamate from L-histidine: step 2/3.</text>
</comment>
<comment type="subcellular location">
    <subcellularLocation>
        <location evidence="1">Cytoplasm</location>
    </subcellularLocation>
</comment>
<comment type="similarity">
    <text evidence="1">Belongs to the urocanase family.</text>
</comment>
<dbReference type="EC" id="4.2.1.49" evidence="1"/>
<dbReference type="EMBL" id="AL591985">
    <property type="protein sequence ID" value="CAC49229.1"/>
    <property type="molecule type" value="Genomic_DNA"/>
</dbReference>
<dbReference type="PIR" id="E95945">
    <property type="entry name" value="E95945"/>
</dbReference>
<dbReference type="RefSeq" id="NP_437369.1">
    <property type="nucleotide sequence ID" value="NC_003078.1"/>
</dbReference>
<dbReference type="RefSeq" id="WP_010975685.1">
    <property type="nucleotide sequence ID" value="NC_003078.1"/>
</dbReference>
<dbReference type="SMR" id="Q92V80"/>
<dbReference type="EnsemblBacteria" id="CAC49229">
    <property type="protein sequence ID" value="CAC49229"/>
    <property type="gene ID" value="SM_b21163"/>
</dbReference>
<dbReference type="KEGG" id="sme:SM_b21163"/>
<dbReference type="PATRIC" id="fig|266834.11.peg.5760"/>
<dbReference type="eggNOG" id="COG2987">
    <property type="taxonomic scope" value="Bacteria"/>
</dbReference>
<dbReference type="HOGENOM" id="CLU_018868_0_1_5"/>
<dbReference type="OrthoDB" id="9764874at2"/>
<dbReference type="UniPathway" id="UPA00379">
    <property type="reaction ID" value="UER00550"/>
</dbReference>
<dbReference type="Proteomes" id="UP000001976">
    <property type="component" value="Plasmid pSymB"/>
</dbReference>
<dbReference type="GO" id="GO:0005737">
    <property type="term" value="C:cytoplasm"/>
    <property type="evidence" value="ECO:0007669"/>
    <property type="project" value="UniProtKB-SubCell"/>
</dbReference>
<dbReference type="GO" id="GO:0016153">
    <property type="term" value="F:urocanate hydratase activity"/>
    <property type="evidence" value="ECO:0007669"/>
    <property type="project" value="UniProtKB-UniRule"/>
</dbReference>
<dbReference type="GO" id="GO:0019556">
    <property type="term" value="P:L-histidine catabolic process to glutamate and formamide"/>
    <property type="evidence" value="ECO:0007669"/>
    <property type="project" value="UniProtKB-UniPathway"/>
</dbReference>
<dbReference type="GO" id="GO:0019557">
    <property type="term" value="P:L-histidine catabolic process to glutamate and formate"/>
    <property type="evidence" value="ECO:0007669"/>
    <property type="project" value="UniProtKB-UniPathway"/>
</dbReference>
<dbReference type="FunFam" id="3.40.50.10730:FF:000001">
    <property type="entry name" value="Urocanate hydratase"/>
    <property type="match status" value="1"/>
</dbReference>
<dbReference type="Gene3D" id="3.40.50.10730">
    <property type="entry name" value="Urocanase like domains"/>
    <property type="match status" value="1"/>
</dbReference>
<dbReference type="Gene3D" id="3.40.1770.10">
    <property type="entry name" value="Urocanase superfamily"/>
    <property type="match status" value="1"/>
</dbReference>
<dbReference type="HAMAP" id="MF_00577">
    <property type="entry name" value="HutU"/>
    <property type="match status" value="1"/>
</dbReference>
<dbReference type="InterPro" id="IPR055351">
    <property type="entry name" value="Urocanase"/>
</dbReference>
<dbReference type="InterPro" id="IPR023637">
    <property type="entry name" value="Urocanase-like"/>
</dbReference>
<dbReference type="InterPro" id="IPR035401">
    <property type="entry name" value="Urocanase_C"/>
</dbReference>
<dbReference type="InterPro" id="IPR038364">
    <property type="entry name" value="Urocanase_central_sf"/>
</dbReference>
<dbReference type="InterPro" id="IPR023636">
    <property type="entry name" value="Urocanase_CS"/>
</dbReference>
<dbReference type="InterPro" id="IPR035400">
    <property type="entry name" value="Urocanase_N"/>
</dbReference>
<dbReference type="InterPro" id="IPR035085">
    <property type="entry name" value="Urocanase_Rossmann-like"/>
</dbReference>
<dbReference type="InterPro" id="IPR036190">
    <property type="entry name" value="Urocanase_sf"/>
</dbReference>
<dbReference type="NCBIfam" id="TIGR01228">
    <property type="entry name" value="hutU"/>
    <property type="match status" value="1"/>
</dbReference>
<dbReference type="NCBIfam" id="NF003820">
    <property type="entry name" value="PRK05414.1"/>
    <property type="match status" value="1"/>
</dbReference>
<dbReference type="PANTHER" id="PTHR12216">
    <property type="entry name" value="UROCANATE HYDRATASE"/>
    <property type="match status" value="1"/>
</dbReference>
<dbReference type="PANTHER" id="PTHR12216:SF4">
    <property type="entry name" value="UROCANATE HYDRATASE"/>
    <property type="match status" value="1"/>
</dbReference>
<dbReference type="Pfam" id="PF01175">
    <property type="entry name" value="Urocanase"/>
    <property type="match status" value="1"/>
</dbReference>
<dbReference type="Pfam" id="PF17392">
    <property type="entry name" value="Urocanase_C"/>
    <property type="match status" value="1"/>
</dbReference>
<dbReference type="Pfam" id="PF17391">
    <property type="entry name" value="Urocanase_N"/>
    <property type="match status" value="1"/>
</dbReference>
<dbReference type="PIRSF" id="PIRSF001423">
    <property type="entry name" value="Urocanate_hydrat"/>
    <property type="match status" value="1"/>
</dbReference>
<dbReference type="SUPFAM" id="SSF111326">
    <property type="entry name" value="Urocanase"/>
    <property type="match status" value="1"/>
</dbReference>
<dbReference type="PROSITE" id="PS01233">
    <property type="entry name" value="UROCANASE"/>
    <property type="match status" value="1"/>
</dbReference>
<accession>Q92V80</accession>
<keyword id="KW-0963">Cytoplasm</keyword>
<keyword id="KW-0369">Histidine metabolism</keyword>
<keyword id="KW-0456">Lyase</keyword>
<keyword id="KW-0520">NAD</keyword>
<keyword id="KW-0614">Plasmid</keyword>
<keyword id="KW-1185">Reference proteome</keyword>
<geneLocation type="plasmid">
    <name>pSymB</name>
    <name>megaplasmid 2</name>
</geneLocation>
<reference key="1">
    <citation type="journal article" date="2001" name="Proc. Natl. Acad. Sci. U.S.A.">
        <title>The complete sequence of the 1,683-kb pSymB megaplasmid from the N2-fixing endosymbiont Sinorhizobium meliloti.</title>
        <authorList>
            <person name="Finan T.M."/>
            <person name="Weidner S."/>
            <person name="Wong K."/>
            <person name="Buhrmester J."/>
            <person name="Chain P."/>
            <person name="Vorhoelter F.J."/>
            <person name="Hernandez-Lucas I."/>
            <person name="Becker A."/>
            <person name="Cowie A."/>
            <person name="Gouzy J."/>
            <person name="Golding B."/>
            <person name="Puehler A."/>
        </authorList>
    </citation>
    <scope>NUCLEOTIDE SEQUENCE [LARGE SCALE GENOMIC DNA]</scope>
    <source>
        <strain>1021</strain>
    </source>
</reference>
<reference key="2">
    <citation type="journal article" date="2001" name="Science">
        <title>The composite genome of the legume symbiont Sinorhizobium meliloti.</title>
        <authorList>
            <person name="Galibert F."/>
            <person name="Finan T.M."/>
            <person name="Long S.R."/>
            <person name="Puehler A."/>
            <person name="Abola P."/>
            <person name="Ampe F."/>
            <person name="Barloy-Hubler F."/>
            <person name="Barnett M.J."/>
            <person name="Becker A."/>
            <person name="Boistard P."/>
            <person name="Bothe G."/>
            <person name="Boutry M."/>
            <person name="Bowser L."/>
            <person name="Buhrmester J."/>
            <person name="Cadieu E."/>
            <person name="Capela D."/>
            <person name="Chain P."/>
            <person name="Cowie A."/>
            <person name="Davis R.W."/>
            <person name="Dreano S."/>
            <person name="Federspiel N.A."/>
            <person name="Fisher R.F."/>
            <person name="Gloux S."/>
            <person name="Godrie T."/>
            <person name="Goffeau A."/>
            <person name="Golding B."/>
            <person name="Gouzy J."/>
            <person name="Gurjal M."/>
            <person name="Hernandez-Lucas I."/>
            <person name="Hong A."/>
            <person name="Huizar L."/>
            <person name="Hyman R.W."/>
            <person name="Jones T."/>
            <person name="Kahn D."/>
            <person name="Kahn M.L."/>
            <person name="Kalman S."/>
            <person name="Keating D.H."/>
            <person name="Kiss E."/>
            <person name="Komp C."/>
            <person name="Lelaure V."/>
            <person name="Masuy D."/>
            <person name="Palm C."/>
            <person name="Peck M.C."/>
            <person name="Pohl T.M."/>
            <person name="Portetelle D."/>
            <person name="Purnelle B."/>
            <person name="Ramsperger U."/>
            <person name="Surzycki R."/>
            <person name="Thebault P."/>
            <person name="Vandenbol M."/>
            <person name="Vorhoelter F.J."/>
            <person name="Weidner S."/>
            <person name="Wells D.H."/>
            <person name="Wong K."/>
            <person name="Yeh K.-C."/>
            <person name="Batut J."/>
        </authorList>
    </citation>
    <scope>NUCLEOTIDE SEQUENCE [LARGE SCALE GENOMIC DNA]</scope>
    <source>
        <strain>1021</strain>
    </source>
</reference>
<sequence>MNNPRHNIREVRSPRGTEISAKSWLTEAPLRMLMNNLDPDVAENPHELVVYGGIGRAARTWADFDRIVASLKDLNEDETLLVQSGKPVGVFRTHKDAPRVLIANSNLVPHWATWDHFNELDKKGLAMYGQMTAGSWIYIGTQGIVQGTYETFVEAGRQHYGGSLKGKWILTGGLGGMGGAQPLAAVMAGACCLAVECNPDSIDFRLRTRYLDEKAETLEEAMEMIERWTKAGEPKSVGLLGNAAEILPEMVRRGIRPDMVTDQTSAHDPINGYLPKGWTMAEWKAKRESDPKAVEKAARASMRDHVEAMLAFWDSGVPTLDYGNNIRQVAKDEGLERAFDFPGFVPAYIRPLFCRGIGPFRWAALSGDPEDIYRTDRKVKELLPDNKHLHNWLDMARERIAFQGLPARICWVGLGDRHRLGLAFNEMVRSGELKAPIVIGRDHLDSGSVASPNRETEAMKDGSDAVSDWPLLNALLNTASGATWVSLHHGGGVGMGFSQHSGMVICCDGTDDAARRIERVLWNDPATGVMRHADAGYDIAVDCAREKGLRLPGILGE</sequence>
<evidence type="ECO:0000255" key="1">
    <source>
        <dbReference type="HAMAP-Rule" id="MF_00577"/>
    </source>
</evidence>
<proteinExistence type="inferred from homology"/>